<evidence type="ECO:0000255" key="1">
    <source>
        <dbReference type="HAMAP-Rule" id="MF_01813"/>
    </source>
</evidence>
<feature type="chain" id="PRO_1000056303" description="Ubiquinone/menaquinone biosynthesis C-methyltransferase UbiE">
    <location>
        <begin position="1"/>
        <end position="251"/>
    </location>
</feature>
<feature type="binding site" evidence="1">
    <location>
        <position position="74"/>
    </location>
    <ligand>
        <name>S-adenosyl-L-methionine</name>
        <dbReference type="ChEBI" id="CHEBI:59789"/>
    </ligand>
</feature>
<feature type="binding site" evidence="1">
    <location>
        <position position="95"/>
    </location>
    <ligand>
        <name>S-adenosyl-L-methionine</name>
        <dbReference type="ChEBI" id="CHEBI:59789"/>
    </ligand>
</feature>
<feature type="binding site" evidence="1">
    <location>
        <begin position="123"/>
        <end position="124"/>
    </location>
    <ligand>
        <name>S-adenosyl-L-methionine</name>
        <dbReference type="ChEBI" id="CHEBI:59789"/>
    </ligand>
</feature>
<feature type="binding site" evidence="1">
    <location>
        <position position="140"/>
    </location>
    <ligand>
        <name>S-adenosyl-L-methionine</name>
        <dbReference type="ChEBI" id="CHEBI:59789"/>
    </ligand>
</feature>
<dbReference type="EC" id="2.1.1.163" evidence="1"/>
<dbReference type="EC" id="2.1.1.201" evidence="1"/>
<dbReference type="EMBL" id="CP000036">
    <property type="protein sequence ID" value="ABB68305.1"/>
    <property type="molecule type" value="Genomic_DNA"/>
</dbReference>
<dbReference type="RefSeq" id="WP_000227958.1">
    <property type="nucleotide sequence ID" value="NC_007613.1"/>
</dbReference>
<dbReference type="SMR" id="Q31UF3"/>
<dbReference type="GeneID" id="93778102"/>
<dbReference type="KEGG" id="sbo:SBO_3847"/>
<dbReference type="HOGENOM" id="CLU_037990_0_0_6"/>
<dbReference type="UniPathway" id="UPA00079">
    <property type="reaction ID" value="UER00169"/>
</dbReference>
<dbReference type="UniPathway" id="UPA00232"/>
<dbReference type="Proteomes" id="UP000007067">
    <property type="component" value="Chromosome"/>
</dbReference>
<dbReference type="GO" id="GO:0008425">
    <property type="term" value="F:2-methoxy-6-polyprenyl-1,4-benzoquinol methyltransferase activity"/>
    <property type="evidence" value="ECO:0007669"/>
    <property type="project" value="UniProtKB-UniRule"/>
</dbReference>
<dbReference type="GO" id="GO:0043770">
    <property type="term" value="F:demethylmenaquinone methyltransferase activity"/>
    <property type="evidence" value="ECO:0007669"/>
    <property type="project" value="UniProtKB-UniRule"/>
</dbReference>
<dbReference type="GO" id="GO:0009060">
    <property type="term" value="P:aerobic respiration"/>
    <property type="evidence" value="ECO:0007669"/>
    <property type="project" value="UniProtKB-UniRule"/>
</dbReference>
<dbReference type="GO" id="GO:0009234">
    <property type="term" value="P:menaquinone biosynthetic process"/>
    <property type="evidence" value="ECO:0007669"/>
    <property type="project" value="UniProtKB-UniRule"/>
</dbReference>
<dbReference type="GO" id="GO:0032259">
    <property type="term" value="P:methylation"/>
    <property type="evidence" value="ECO:0007669"/>
    <property type="project" value="UniProtKB-KW"/>
</dbReference>
<dbReference type="CDD" id="cd02440">
    <property type="entry name" value="AdoMet_MTases"/>
    <property type="match status" value="1"/>
</dbReference>
<dbReference type="FunFam" id="3.40.50.150:FF:000014">
    <property type="entry name" value="Ubiquinone/menaquinone biosynthesis C-methyltransferase UbiE"/>
    <property type="match status" value="1"/>
</dbReference>
<dbReference type="Gene3D" id="3.40.50.150">
    <property type="entry name" value="Vaccinia Virus protein VP39"/>
    <property type="match status" value="1"/>
</dbReference>
<dbReference type="HAMAP" id="MF_01813">
    <property type="entry name" value="MenG_UbiE_methyltr"/>
    <property type="match status" value="1"/>
</dbReference>
<dbReference type="InterPro" id="IPR029063">
    <property type="entry name" value="SAM-dependent_MTases_sf"/>
</dbReference>
<dbReference type="InterPro" id="IPR004033">
    <property type="entry name" value="UbiE/COQ5_MeTrFase"/>
</dbReference>
<dbReference type="InterPro" id="IPR023576">
    <property type="entry name" value="UbiE/COQ5_MeTrFase_CS"/>
</dbReference>
<dbReference type="NCBIfam" id="TIGR01934">
    <property type="entry name" value="MenG_MenH_UbiE"/>
    <property type="match status" value="1"/>
</dbReference>
<dbReference type="NCBIfam" id="NF001240">
    <property type="entry name" value="PRK00216.1-1"/>
    <property type="match status" value="1"/>
</dbReference>
<dbReference type="NCBIfam" id="NF001242">
    <property type="entry name" value="PRK00216.1-3"/>
    <property type="match status" value="1"/>
</dbReference>
<dbReference type="NCBIfam" id="NF001244">
    <property type="entry name" value="PRK00216.1-5"/>
    <property type="match status" value="1"/>
</dbReference>
<dbReference type="PANTHER" id="PTHR43591:SF24">
    <property type="entry name" value="2-METHOXY-6-POLYPRENYL-1,4-BENZOQUINOL METHYLASE, MITOCHONDRIAL"/>
    <property type="match status" value="1"/>
</dbReference>
<dbReference type="PANTHER" id="PTHR43591">
    <property type="entry name" value="METHYLTRANSFERASE"/>
    <property type="match status" value="1"/>
</dbReference>
<dbReference type="Pfam" id="PF01209">
    <property type="entry name" value="Ubie_methyltran"/>
    <property type="match status" value="1"/>
</dbReference>
<dbReference type="SUPFAM" id="SSF53335">
    <property type="entry name" value="S-adenosyl-L-methionine-dependent methyltransferases"/>
    <property type="match status" value="1"/>
</dbReference>
<dbReference type="PROSITE" id="PS51608">
    <property type="entry name" value="SAM_MT_UBIE"/>
    <property type="match status" value="1"/>
</dbReference>
<dbReference type="PROSITE" id="PS01183">
    <property type="entry name" value="UBIE_1"/>
    <property type="match status" value="1"/>
</dbReference>
<dbReference type="PROSITE" id="PS01184">
    <property type="entry name" value="UBIE_2"/>
    <property type="match status" value="1"/>
</dbReference>
<name>UBIE_SHIBS</name>
<accession>Q31UF3</accession>
<proteinExistence type="inferred from homology"/>
<organism>
    <name type="scientific">Shigella boydii serotype 4 (strain Sb227)</name>
    <dbReference type="NCBI Taxonomy" id="300268"/>
    <lineage>
        <taxon>Bacteria</taxon>
        <taxon>Pseudomonadati</taxon>
        <taxon>Pseudomonadota</taxon>
        <taxon>Gammaproteobacteria</taxon>
        <taxon>Enterobacterales</taxon>
        <taxon>Enterobacteriaceae</taxon>
        <taxon>Shigella</taxon>
    </lineage>
</organism>
<gene>
    <name evidence="1" type="primary">ubiE</name>
    <name type="ordered locus">SBO_3847</name>
</gene>
<comment type="function">
    <text evidence="1">Methyltransferase required for the conversion of demethylmenaquinol (DMKH2) to menaquinol (MKH2) and the conversion of 2-polyprenyl-6-methoxy-1,4-benzoquinol (DDMQH2) to 2-polyprenyl-3-methyl-6-methoxy-1,4-benzoquinol (DMQH2).</text>
</comment>
<comment type="catalytic activity">
    <reaction evidence="1">
        <text>a 2-demethylmenaquinol + S-adenosyl-L-methionine = a menaquinol + S-adenosyl-L-homocysteine + H(+)</text>
        <dbReference type="Rhea" id="RHEA:42640"/>
        <dbReference type="Rhea" id="RHEA-COMP:9539"/>
        <dbReference type="Rhea" id="RHEA-COMP:9563"/>
        <dbReference type="ChEBI" id="CHEBI:15378"/>
        <dbReference type="ChEBI" id="CHEBI:18151"/>
        <dbReference type="ChEBI" id="CHEBI:55437"/>
        <dbReference type="ChEBI" id="CHEBI:57856"/>
        <dbReference type="ChEBI" id="CHEBI:59789"/>
        <dbReference type="EC" id="2.1.1.163"/>
    </reaction>
</comment>
<comment type="catalytic activity">
    <reaction evidence="1">
        <text>a 2-methoxy-6-(all-trans-polyprenyl)benzene-1,4-diol + S-adenosyl-L-methionine = a 5-methoxy-2-methyl-3-(all-trans-polyprenyl)benzene-1,4-diol + S-adenosyl-L-homocysteine + H(+)</text>
        <dbReference type="Rhea" id="RHEA:28286"/>
        <dbReference type="Rhea" id="RHEA-COMP:10858"/>
        <dbReference type="Rhea" id="RHEA-COMP:10859"/>
        <dbReference type="ChEBI" id="CHEBI:15378"/>
        <dbReference type="ChEBI" id="CHEBI:57856"/>
        <dbReference type="ChEBI" id="CHEBI:59789"/>
        <dbReference type="ChEBI" id="CHEBI:84166"/>
        <dbReference type="ChEBI" id="CHEBI:84167"/>
        <dbReference type="EC" id="2.1.1.201"/>
    </reaction>
</comment>
<comment type="pathway">
    <text evidence="1">Quinol/quinone metabolism; menaquinone biosynthesis; menaquinol from 1,4-dihydroxy-2-naphthoate: step 2/2.</text>
</comment>
<comment type="pathway">
    <text evidence="1">Cofactor biosynthesis; ubiquinone biosynthesis.</text>
</comment>
<comment type="similarity">
    <text evidence="1">Belongs to the class I-like SAM-binding methyltransferase superfamily. MenG/UbiE family.</text>
</comment>
<protein>
    <recommendedName>
        <fullName evidence="1">Ubiquinone/menaquinone biosynthesis C-methyltransferase UbiE</fullName>
        <ecNumber evidence="1">2.1.1.163</ecNumber>
        <ecNumber evidence="1">2.1.1.201</ecNumber>
    </recommendedName>
    <alternativeName>
        <fullName evidence="1">2-methoxy-6-polyprenyl-1,4-benzoquinol methylase</fullName>
    </alternativeName>
    <alternativeName>
        <fullName evidence="1">Demethylmenaquinone methyltransferase</fullName>
    </alternativeName>
</protein>
<keyword id="KW-0474">Menaquinone biosynthesis</keyword>
<keyword id="KW-0489">Methyltransferase</keyword>
<keyword id="KW-0949">S-adenosyl-L-methionine</keyword>
<keyword id="KW-0808">Transferase</keyword>
<keyword id="KW-0831">Ubiquinone biosynthesis</keyword>
<sequence length="251" mass="28073">MVDKSQETTHFGFQTVAKEQKADMVAHVFHSVASKYDVMNDLMSFGIHRLWKRFTIDCSGVRRGQTVLDLAGGTGDLTAKFSRLVGETGKVVLADINESMLKMGREKLRNIGVIGNVEYVQANAEALPFPDNTFDCITISFGLRNVTDKDKALRSMYRVLKPGGRLLVLEFSKPIIEPLSKAYDAYSFHVLPRIGSLVANDADSYRYLAESIRMHPDQDTLKAMMQDAGFESVDYYNLTAGVVALHRGYKF</sequence>
<reference key="1">
    <citation type="journal article" date="2005" name="Nucleic Acids Res.">
        <title>Genome dynamics and diversity of Shigella species, the etiologic agents of bacillary dysentery.</title>
        <authorList>
            <person name="Yang F."/>
            <person name="Yang J."/>
            <person name="Zhang X."/>
            <person name="Chen L."/>
            <person name="Jiang Y."/>
            <person name="Yan Y."/>
            <person name="Tang X."/>
            <person name="Wang J."/>
            <person name="Xiong Z."/>
            <person name="Dong J."/>
            <person name="Xue Y."/>
            <person name="Zhu Y."/>
            <person name="Xu X."/>
            <person name="Sun L."/>
            <person name="Chen S."/>
            <person name="Nie H."/>
            <person name="Peng J."/>
            <person name="Xu J."/>
            <person name="Wang Y."/>
            <person name="Yuan Z."/>
            <person name="Wen Y."/>
            <person name="Yao Z."/>
            <person name="Shen Y."/>
            <person name="Qiang B."/>
            <person name="Hou Y."/>
            <person name="Yu J."/>
            <person name="Jin Q."/>
        </authorList>
    </citation>
    <scope>NUCLEOTIDE SEQUENCE [LARGE SCALE GENOMIC DNA]</scope>
    <source>
        <strain>Sb227</strain>
    </source>
</reference>